<sequence>MESSAKRKMDPDNPDEGPSSKVPRPETPVTKATTFLQTMLRKEVNSQLSLGDPLFPELAEESLKTFEQVTEDCNENPEKDVLAELGDILAQAVNHAGIDSSSTGPTLTTHSCSVSSAPLNKPTPTSVAVTNTPLPGASATPELSPRKKPRKTTRPFKVIIKPPVPPAPIMLPLIKQEDIKPEPDFTIQYRNKIIDTAGCIVISDSEEEQGEEVETRGATASSPSTGSGTPRVTSPTHPLSQMNHPPLPDPLGRPDEDSSSSSSSSCSSASDSESESEEMKCSSGGGASVTSSHHGRGGFGGAASSSLLSCGHQSSGGASTGPRKKKSKRISELDNEKVRNIMKDKNTPFCTPNVQTRRGRVKIDEVSRMFRNTNRSLEYKNLPFTIPSMHQVLDEAIKACKTMQVNNKGIQIIYTRNHEVKSEVDAVRCRLGTMCNLALSTPFLMEHTMPVTHPPEVAQRTADACNEGVKAAWSLKELHTHQLCPRSSDYRNMIIHAATPVDLLGALNLCLPLMQKFPKQVMVRIFSTNQGGFMLPIYETAAKAYAVGQFEQPTETPPEDLDTLSLAIEAAIQDLRNKSQ</sequence>
<organism>
    <name type="scientific">Human cytomegalovirus (strain AD169)</name>
    <name type="common">HHV-5</name>
    <name type="synonym">Human herpesvirus 5</name>
    <dbReference type="NCBI Taxonomy" id="10360"/>
    <lineage>
        <taxon>Viruses</taxon>
        <taxon>Duplodnaviria</taxon>
        <taxon>Heunggongvirae</taxon>
        <taxon>Peploviricota</taxon>
        <taxon>Herviviricetes</taxon>
        <taxon>Herpesvirales</taxon>
        <taxon>Orthoherpesviridae</taxon>
        <taxon>Betaherpesvirinae</taxon>
        <taxon>Cytomegalovirus</taxon>
        <taxon>Cytomegalovirus humanbeta5</taxon>
        <taxon>Human cytomegalovirus</taxon>
    </lineage>
</organism>
<name>VIE2_HCMVA</name>
<evidence type="ECO:0000250" key="1">
    <source>
        <dbReference type="UniProtKB" id="Q6SWP7"/>
    </source>
</evidence>
<evidence type="ECO:0000256" key="2">
    <source>
        <dbReference type="SAM" id="MobiDB-lite"/>
    </source>
</evidence>
<evidence type="ECO:0000269" key="3">
    <source>
    </source>
</evidence>
<evidence type="ECO:0000269" key="4">
    <source>
    </source>
</evidence>
<evidence type="ECO:0000269" key="5">
    <source>
    </source>
</evidence>
<evidence type="ECO:0000269" key="6">
    <source>
    </source>
</evidence>
<evidence type="ECO:0000269" key="7">
    <source>
    </source>
</evidence>
<evidence type="ECO:0000269" key="8">
    <source>
    </source>
</evidence>
<evidence type="ECO:0000305" key="9"/>
<evidence type="ECO:0007744" key="10">
    <source>
        <dbReference type="PDB" id="6K5R"/>
    </source>
</evidence>
<evidence type="ECO:0007744" key="11">
    <source>
        <dbReference type="PDB" id="6K5T"/>
    </source>
</evidence>
<evidence type="ECO:0007829" key="12">
    <source>
        <dbReference type="PDB" id="6K5R"/>
    </source>
</evidence>
<keyword id="KW-0002">3D-structure</keyword>
<keyword id="KW-0010">Activator</keyword>
<keyword id="KW-0238">DNA-binding</keyword>
<keyword id="KW-0244">Early protein</keyword>
<keyword id="KW-1077">G0/G1 host cell cycle checkpoint dysregulation by virus</keyword>
<keyword id="KW-1078">G1/S host cell cycle checkpoint dysregulation by virus</keyword>
<keyword id="KW-1048">Host nucleus</keyword>
<keyword id="KW-0945">Host-virus interaction</keyword>
<keyword id="KW-1017">Isopeptide bond</keyword>
<keyword id="KW-0479">Metal-binding</keyword>
<keyword id="KW-1121">Modulation of host cell cycle by virus</keyword>
<keyword id="KW-0597">Phosphoprotein</keyword>
<keyword id="KW-1185">Reference proteome</keyword>
<keyword id="KW-0804">Transcription</keyword>
<keyword id="KW-0805">Transcription regulation</keyword>
<keyword id="KW-0832">Ubl conjugation</keyword>
<proteinExistence type="evidence at protein level"/>
<protein>
    <recommendedName>
        <fullName>Viral transcription factor IE2</fullName>
        <shortName>IE2</shortName>
    </recommendedName>
    <alternativeName>
        <fullName>Protein UL122</fullName>
    </alternativeName>
</protein>
<comment type="function">
    <text evidence="1 3 4 7">Stimulates viral early and late gene expression and thus play a crucial role in the regulation of productive infection (PubMed:31371453). Selectively drives host RNA Pol II transcription initiation at a subset of viral early-late and late promoters without substantially affecting Pol II transcription of expressed host genes. Mechanistically, forms a repressive complex at the major immediate-early promoter region involving direct association with host nucleosomes and TBP. Concerning activation, stimulates transcription by binding nearby, but not within, core promoter regions. In addition, activates quiescent cells to reenter the cell cycle and up-regulates several E2F-responsive genes, which are responsible for pushing the cell into S phase (PubMed:10516036). In S-phase, inhibits cellular DNA synthesis and blocks further cell cycle progression.</text>
</comment>
<comment type="subunit">
    <text evidence="1 5 6 8">Interacts with host SUMO-modified form of TATA-binding protein (TBP)-associated factor 12/TAF12 in a SIM-dependent manner; this interaction increases the transactivation activity of IE2 (PubMed:20519406). Interacts with host CHAF1A. Interacts with several components of the host transcriptional machinery including TBP, TF2B and CREB1 (PubMed:7666507). Interacts with host DNA replication licensing factor MCM3 (PubMed:20545442). Interacts with host PLSCR1; this interaction inhibits IE2 transactivating activity (By similarity).</text>
</comment>
<comment type="subcellular location">
    <subcellularLocation>
        <location evidence="1">Host nucleus</location>
    </subcellularLocation>
    <text evidence="1">Colocalizes with host PML-associated nuclear bodies.</text>
</comment>
<comment type="domain">
    <text evidence="4">The SUMO-interacting motif (SIM) is required for efficient transactivation function.</text>
</comment>
<comment type="domain">
    <text evidence="7">The SIM1 and SIM3 motifs, but not SIM2, interact with host SUMO1 and SUMO2.</text>
</comment>
<comment type="PTM">
    <text evidence="7">Phosphorylated by host CK2 at Ser-203 and Ser-205; leading to enhanced SUMOylation.</text>
</comment>
<comment type="PTM">
    <text evidence="4 7">SUMOylated; SUMOylation is enhanced when IE2 is phosphorylated by host CK2 (PubMed:31371453). The sumoylation is necessary for efficient replication of the virus and thus for the function of this viral transcription factor (PubMed:19812159).</text>
</comment>
<comment type="similarity">
    <text evidence="9">Belongs to the HHV-5 IE2 protein family.</text>
</comment>
<comment type="sequence caution" evidence="9">
    <conflict type="frameshift">
        <sequence resource="EMBL-CDS" id="CAA35324"/>
    </conflict>
</comment>
<feature type="chain" id="PRO_0000115351" description="Viral transcription factor IE2">
    <location>
        <begin position="1"/>
        <end position="580"/>
    </location>
</feature>
<feature type="region of interest" description="Disordered" evidence="2">
    <location>
        <begin position="1"/>
        <end position="30"/>
    </location>
</feature>
<feature type="region of interest" description="Disordered" evidence="2">
    <location>
        <begin position="99"/>
        <end position="161"/>
    </location>
</feature>
<feature type="region of interest" description="Disordered" evidence="2">
    <location>
        <begin position="206"/>
        <end position="335"/>
    </location>
</feature>
<feature type="short sequence motif" description="SUMO-interacting motif 1/SIM1" evidence="7">
    <location>
        <begin position="199"/>
        <end position="202"/>
    </location>
</feature>
<feature type="short sequence motif" description="SUMO-interacting motif 1/SIM2" evidence="7">
    <location>
        <begin position="410"/>
        <end position="413"/>
    </location>
</feature>
<feature type="short sequence motif" description="SUMO-interacting motif 1/SIM3" evidence="7">
    <location>
        <begin position="501"/>
        <end position="504"/>
    </location>
</feature>
<feature type="compositionally biased region" description="Basic and acidic residues" evidence="2">
    <location>
        <begin position="1"/>
        <end position="11"/>
    </location>
</feature>
<feature type="compositionally biased region" description="Polar residues" evidence="2">
    <location>
        <begin position="99"/>
        <end position="133"/>
    </location>
</feature>
<feature type="compositionally biased region" description="Low complexity" evidence="2">
    <location>
        <begin position="216"/>
        <end position="236"/>
    </location>
</feature>
<feature type="compositionally biased region" description="Low complexity" evidence="2">
    <location>
        <begin position="259"/>
        <end position="271"/>
    </location>
</feature>
<feature type="compositionally biased region" description="Low complexity" evidence="2">
    <location>
        <begin position="302"/>
        <end position="317"/>
    </location>
</feature>
<feature type="modified residue" description="Phosphoserine; by host CK2" evidence="7">
    <location>
        <position position="203"/>
    </location>
</feature>
<feature type="modified residue" description="Phosphoserine; by host CK2" evidence="7">
    <location>
        <position position="205"/>
    </location>
</feature>
<feature type="cross-link" description="Glycyl lysine isopeptide (Lys-Gly) (interchain with G-Cter in SUMO)" evidence="4">
    <location>
        <position position="175"/>
    </location>
</feature>
<feature type="cross-link" description="Glycyl lysine isopeptide (Lys-Gly) (interchain with G-Cter in SUMO)" evidence="4">
    <location>
        <position position="180"/>
    </location>
</feature>
<feature type="strand" evidence="12">
    <location>
        <begin position="197"/>
        <end position="201"/>
    </location>
</feature>
<organismHost>
    <name type="scientific">Homo sapiens</name>
    <name type="common">Human</name>
    <dbReference type="NCBI Taxonomy" id="9606"/>
</organismHost>
<gene>
    <name type="primary">UL122</name>
</gene>
<reference key="1">
    <citation type="journal article" date="1990" name="Curr. Top. Microbiol. Immunol.">
        <title>Analysis of the protein-coding content of the sequence of human cytomegalovirus strain AD169.</title>
        <authorList>
            <person name="Chee M.S."/>
            <person name="Bankier A.T."/>
            <person name="Beck S."/>
            <person name="Bohni R."/>
            <person name="Brown C.M."/>
            <person name="Cerny R."/>
            <person name="Horsnell T."/>
            <person name="Hutchison C.A. III"/>
            <person name="Kouzarides T."/>
            <person name="Martignetti J.A."/>
            <person name="Preddie E."/>
            <person name="Satchwell S.C."/>
            <person name="Tomlinson P."/>
            <person name="Weston K.M."/>
            <person name="Barrell B.G."/>
        </authorList>
    </citation>
    <scope>NUCLEOTIDE SEQUENCE [LARGE SCALE GENOMIC DNA]</scope>
</reference>
<reference key="2">
    <citation type="journal article" date="2003" name="J. Gen. Virol.">
        <title>The human cytomegalovirus genome revisited: comparison with the chimpanzee cytomegalovirus genome.</title>
        <authorList>
            <person name="Davison A.J."/>
            <person name="Dolan A."/>
            <person name="Akter P."/>
            <person name="Addison C."/>
            <person name="Dargan D.J."/>
            <person name="Alcendor D.J."/>
            <person name="McGeoch D.J."/>
            <person name="Hayward G.S."/>
        </authorList>
    </citation>
    <scope>GENOME REANNOTATION</scope>
    <scope>SEQUENCE REVISION</scope>
</reference>
<reference key="3">
    <citation type="journal article" date="2003" name="J. Gen. Virol.">
        <authorList>
            <person name="Davison A.J."/>
            <person name="Dolan A."/>
            <person name="Akter P."/>
            <person name="Addison C."/>
            <person name="Dargan D.J."/>
            <person name="Alcendor D.J."/>
            <person name="McGeoch D.J."/>
            <person name="Hayward G.S."/>
        </authorList>
    </citation>
    <scope>ERRATUM OF PUBMED:12533697</scope>
</reference>
<reference key="4">
    <citation type="journal article" date="2004" name="J. Virol.">
        <title>Identification of proteins in human cytomegalovirus (HCMV) particles: the HCMV proteome.</title>
        <authorList>
            <person name="Varnum S.M."/>
            <person name="Streblow D.N."/>
            <person name="Monroe M.E."/>
            <person name="Smith P."/>
            <person name="Auberry K.J."/>
            <person name="Pasa-Tolic L."/>
            <person name="Wang D."/>
            <person name="Camp D.G. II"/>
            <person name="Rodland K."/>
            <person name="Wiley S."/>
            <person name="Britt W."/>
            <person name="Shenk T."/>
            <person name="Smith R.D."/>
            <person name="Nelson J.A."/>
        </authorList>
    </citation>
    <scope>IDENTIFICATION</scope>
</reference>
<reference key="5">
    <citation type="journal article" date="2004" name="J. Virol.">
        <authorList>
            <person name="Varnum S.M."/>
            <person name="Streblow D.N."/>
            <person name="Monroe M.E."/>
            <person name="Smith P."/>
            <person name="Auberry K.J."/>
            <person name="Pasa-Tolic L."/>
            <person name="Wang D."/>
            <person name="Camp D.G. II"/>
            <person name="Rodland K."/>
            <person name="Wiley S."/>
            <person name="Britt W."/>
            <person name="Shenk T."/>
            <person name="Smith R.D."/>
            <person name="Nelson J.A."/>
        </authorList>
    </citation>
    <scope>ERRATUM OF PUBMED:15452216</scope>
</reference>
<reference key="6">
    <citation type="journal article" date="1995" name="J. Virol.">
        <title>Functional interaction between the human cytomegalovirus 86-kilodalton IE2 protein and the cellular transcription factor CREB.</title>
        <authorList>
            <person name="Lang D."/>
            <person name="Gebert S."/>
            <person name="Arlt H."/>
            <person name="Stamminger T."/>
        </authorList>
    </citation>
    <scope>INTERACTION WITH HOST CREB1</scope>
</reference>
<reference key="7">
    <citation type="journal article" date="1999" name="J. Virol.">
        <title>Human cytomegalovirus 86-kilodalton IE2 protein blocks cell cycle progression in G(1).</title>
        <authorList>
            <person name="Wiebusch L."/>
            <person name="Hagemeier C."/>
        </authorList>
    </citation>
    <scope>FUNCTION IN HOST CELL CYCLE MODULATION</scope>
</reference>
<reference key="8">
    <citation type="journal article" date="2009" name="J. Virol.">
        <title>Importance of covalent and noncovalent SUMO interactions with the major human cytomegalovirus transactivator IE2p86 for viral infection.</title>
        <authorList>
            <person name="Berndt A."/>
            <person name="Hofmann-Winkler H."/>
            <person name="Tavalai N."/>
            <person name="Hahn G."/>
            <person name="Stamminger T."/>
        </authorList>
    </citation>
    <scope>FUNCTION</scope>
    <scope>SUMOYLATION AT LYS-175 AND LYS-180</scope>
    <scope>REGION</scope>
</reference>
<reference key="9">
    <citation type="journal article" date="2010" name="J. Virol.">
        <title>Role of noncovalent SUMO binding by the human cytomegalovirus IE2 transactivator in lytic growth.</title>
        <authorList>
            <person name="Kim E.T."/>
            <person name="Kim Y.E."/>
            <person name="Huh Y.H."/>
            <person name="Ahn J.H."/>
        </authorList>
    </citation>
    <scope>INTERACTION WITH HOST TAF12</scope>
</reference>
<reference key="10">
    <citation type="journal article" date="2010" name="Acta Virol.">
        <title>Human cytomegalovirus IE86 protein binds to cellular Mcm3 protein but does not inhibit its binding to the Epstein-Barr virus oriP in U373MG-p220.2 cells.</title>
        <authorList>
            <person name="Song Y.J."/>
            <person name="Stinski M.F."/>
        </authorList>
    </citation>
    <scope>INTERACTION WITH HOST MCM3</scope>
</reference>
<reference evidence="10 11" key="11">
    <citation type="journal article" date="2019" name="J. Biol. Chem.">
        <title>Casein kinase-2-mediated phosphorylation increases the SUMO-dependent activity of the cytomegalovirus transactivator IE2.</title>
        <authorList>
            <person name="Tripathi V."/>
            <person name="Chatterjee K.S."/>
            <person name="Das R."/>
        </authorList>
    </citation>
    <scope>STRUCTURE BY NMR OF 195-206</scope>
    <scope>FUNCTION</scope>
    <scope>SUMOYLATION</scope>
    <scope>PHOSPHORYLATION AT SER-203 AND SER-205</scope>
    <scope>DOMAIN</scope>
</reference>
<dbReference type="EMBL" id="X17403">
    <property type="protein sequence ID" value="CAA35324.1"/>
    <property type="status" value="ALT_FRAME"/>
    <property type="molecule type" value="Genomic_DNA"/>
</dbReference>
<dbReference type="EMBL" id="BK000394">
    <property type="protein sequence ID" value="DAA00111.1"/>
    <property type="molecule type" value="Genomic_DNA"/>
</dbReference>
<dbReference type="PIR" id="S09889">
    <property type="entry name" value="EDBEM4"/>
</dbReference>
<dbReference type="PDB" id="6K5R">
    <property type="method" value="NMR"/>
    <property type="chains" value="B=195-206"/>
</dbReference>
<dbReference type="PDB" id="6K5T">
    <property type="method" value="NMR"/>
    <property type="chains" value="B=195-206"/>
</dbReference>
<dbReference type="PDBsum" id="6K5R"/>
<dbReference type="PDBsum" id="6K5T"/>
<dbReference type="SMR" id="P19893"/>
<dbReference type="ELM" id="P19893"/>
<dbReference type="iPTMnet" id="P19893"/>
<dbReference type="Proteomes" id="UP000008991">
    <property type="component" value="Segment"/>
</dbReference>
<dbReference type="Proteomes" id="UP000008992">
    <property type="component" value="Segment"/>
</dbReference>
<dbReference type="GO" id="GO:0042025">
    <property type="term" value="C:host cell nucleus"/>
    <property type="evidence" value="ECO:0007669"/>
    <property type="project" value="UniProtKB-SubCell"/>
</dbReference>
<dbReference type="GO" id="GO:0003677">
    <property type="term" value="F:DNA binding"/>
    <property type="evidence" value="ECO:0007669"/>
    <property type="project" value="UniProtKB-KW"/>
</dbReference>
<dbReference type="GO" id="GO:0046872">
    <property type="term" value="F:metal ion binding"/>
    <property type="evidence" value="ECO:0007669"/>
    <property type="project" value="UniProtKB-KW"/>
</dbReference>
<dbReference type="GO" id="GO:0039686">
    <property type="term" value="P:bidirectional double-stranded viral DNA replication"/>
    <property type="evidence" value="ECO:0000314"/>
    <property type="project" value="UniProtKB"/>
</dbReference>
<dbReference type="GO" id="GO:0039695">
    <property type="term" value="P:DNA-templated viral transcription"/>
    <property type="evidence" value="ECO:0000250"/>
    <property type="project" value="UniProtKB"/>
</dbReference>
<dbReference type="GO" id="GO:0006355">
    <property type="term" value="P:regulation of DNA-templated transcription"/>
    <property type="evidence" value="ECO:0007669"/>
    <property type="project" value="InterPro"/>
</dbReference>
<dbReference type="GO" id="GO:0039646">
    <property type="term" value="P:symbiont-mediated perturbation of host cell cycle G0/G1 transition checkpoint"/>
    <property type="evidence" value="ECO:0007669"/>
    <property type="project" value="UniProtKB-KW"/>
</dbReference>
<dbReference type="GO" id="GO:0039645">
    <property type="term" value="P:symbiont-mediated perturbation of host cell cycle G1/S transition checkpoint"/>
    <property type="evidence" value="ECO:0007669"/>
    <property type="project" value="UniProtKB-KW"/>
</dbReference>
<dbReference type="InterPro" id="IPR010855">
    <property type="entry name" value="Cytomega_IE1/IE2"/>
</dbReference>
<dbReference type="InterPro" id="IPR005028">
    <property type="entry name" value="Herpes_IE2_3"/>
</dbReference>
<dbReference type="Pfam" id="PF07340">
    <property type="entry name" value="Herpes_IE1"/>
    <property type="match status" value="1"/>
</dbReference>
<dbReference type="Pfam" id="PF03361">
    <property type="entry name" value="Herpes_IE2_3"/>
    <property type="match status" value="1"/>
</dbReference>
<accession>P19893</accession>
<accession>Q7M6S5</accession>